<accession>P0CG18</accession>
<accession>A8DYQ0</accession>
<accession>C4ZXN5</accession>
<accession>P03842</accession>
<organism>
    <name type="scientific">Escherichia coli (strain K12 / MC4100 / BW2952)</name>
    <dbReference type="NCBI Taxonomy" id="595496"/>
    <lineage>
        <taxon>Bacteria</taxon>
        <taxon>Pseudomonadati</taxon>
        <taxon>Pseudomonadota</taxon>
        <taxon>Gammaproteobacteria</taxon>
        <taxon>Enterobacterales</taxon>
        <taxon>Enterobacteriaceae</taxon>
        <taxon>Escherichia</taxon>
    </lineage>
</organism>
<sequence>MRPAGRSNNQVRPVTLTRNYTKHAEGSVLVEFGDTKVLCTASIEEGVPRFLKGQGQGWITAEYGMLPRSTHTRNAREAAKGKQGGRTMEIQRLIARALRAAVDLKALGEFTITLDCDVLQADGGTRTASITGACVALVDALQKLVENGKLKTNPMKGMVAAVSVGIVNGEAVCDLEYVEDSAAETDMNVVMTEDGRIIEVQGTAEGEPFTHEELLILLALARGGIESIVATQKAALAN</sequence>
<gene>
    <name evidence="1 5" type="primary">rph</name>
    <name evidence="5" type="synonym">orfE</name>
    <name type="ordered locus">BWG_3334</name>
</gene>
<reference key="1">
    <citation type="journal article" date="1984" name="EMBO J.">
        <title>Structure of the Escherichia coli pyrE operon and control of pyrE expression by a UTP modulated intercistronic attentuation.</title>
        <authorList>
            <person name="Poulsen P."/>
            <person name="Bonekamp F."/>
            <person name="Jensen K.F."/>
        </authorList>
    </citation>
    <scope>NUCLEOTIDE SEQUENCE [GENOMIC DNA]</scope>
    <source>
        <strain>K12 / MC4100 / ATCC 35695 / DSM 6574</strain>
    </source>
</reference>
<reference key="2">
    <citation type="journal article" date="1991" name="J. Bacteriol.">
        <title>Escherichia coli orfE (upstream of pyrE) encodes RNase PH.</title>
        <authorList>
            <person name="Ost K.A."/>
            <person name="Deutscher M.P."/>
        </authorList>
    </citation>
    <scope>FUNCTION</scope>
    <scope>SUBUNIT</scope>
    <scope>PROTEIN SEQUENCE OF 1-21</scope>
    <source>
        <strain>K12 / CA265 / 18-11</strain>
    </source>
</reference>
<reference key="3">
    <citation type="journal article" date="1991" name="Res. Microbiol.">
        <title>Three genes preceding pyrE on the Escherichia coli chromosome are essential for survival and normal cell morphology in stationary culture and at high temperature.</title>
        <authorList>
            <person name="Poulsen P."/>
            <person name="Jensen K.F."/>
        </authorList>
    </citation>
    <scope>DISRUPTION PHENOTYPE</scope>
    <scope>IMPORTANCE AT HIGH TEMPERATURE</scope>
    <source>
        <strain>K12 / MC4100 / ATCC 35695 / DSM 6574</strain>
    </source>
</reference>
<reference key="4">
    <citation type="journal article" date="1992" name="J. Biol. Chem.">
        <title>Overexpression and rapid purification of the orfE/rph gene product, RNase PH of Escherichia coli.</title>
        <authorList>
            <person name="Jensen K.F."/>
            <person name="Andersen J.T."/>
            <person name="Poulsen P."/>
        </authorList>
    </citation>
    <scope>FUNCTION</scope>
    <scope>CATALYTIC ACTIVITY</scope>
    <scope>COFACTOR</scope>
    <scope>BIOPHYSICOCHEMICAL PROPERTIES</scope>
    <scope>SUBUNIT</scope>
    <source>
        <strain>K12 / MC1000 / ATCC 39531</strain>
    </source>
</reference>
<reference key="5">
    <citation type="journal article" date="1992" name="J. Biol. Chem.">
        <title>Characterization of Escherichia coli RNase PH.</title>
        <authorList>
            <person name="Kelly K.O."/>
            <person name="Deutscher M.P."/>
        </authorList>
    </citation>
    <scope>CHARACTERIZATION</scope>
    <source>
        <strain>K12 / MC1000 / ATCC 39531</strain>
    </source>
</reference>
<reference key="6">
    <citation type="journal article" date="2009" name="J. Bacteriol.">
        <title>Genomic sequencing reveals regulatory mutations and recombinational events in the widely used MC4100 lineage of Escherichia coli K-12.</title>
        <authorList>
            <person name="Ferenci T."/>
            <person name="Zhou Z."/>
            <person name="Betteridge T."/>
            <person name="Ren Y."/>
            <person name="Liu Y."/>
            <person name="Feng L."/>
            <person name="Reeves P.R."/>
            <person name="Wang L."/>
        </authorList>
    </citation>
    <scope>NUCLEOTIDE SEQUENCE [LARGE SCALE GENOMIC DNA]</scope>
    <source>
        <strain>K12 / MC4100 / BW2952</strain>
    </source>
</reference>
<evidence type="ECO:0000255" key="1">
    <source>
        <dbReference type="HAMAP-Rule" id="MF_00564"/>
    </source>
</evidence>
<evidence type="ECO:0000269" key="2">
    <source>
    </source>
</evidence>
<evidence type="ECO:0000269" key="3">
    <source>
    </source>
</evidence>
<evidence type="ECO:0000269" key="4">
    <source>
    </source>
</evidence>
<evidence type="ECO:0000303" key="5">
    <source>
    </source>
</evidence>
<evidence type="ECO:0000305" key="6"/>
<evidence type="ECO:0000305" key="7">
    <source>
    </source>
</evidence>
<protein>
    <recommendedName>
        <fullName evidence="1">Ribonuclease PH</fullName>
        <shortName evidence="1">RNase PH</shortName>
        <ecNumber evidence="1 2">2.7.7.56</ecNumber>
    </recommendedName>
    <alternativeName>
        <fullName evidence="1">tRNA nucleotidyltransferase</fullName>
    </alternativeName>
</protein>
<dbReference type="EC" id="2.7.7.56" evidence="1 2"/>
<dbReference type="EMBL" id="X00781">
    <property type="protein sequence ID" value="CAA25357.1"/>
    <property type="molecule type" value="Genomic_DNA"/>
</dbReference>
<dbReference type="EMBL" id="CP001396">
    <property type="protein sequence ID" value="ACR62740.1"/>
    <property type="molecule type" value="Genomic_DNA"/>
</dbReference>
<dbReference type="RefSeq" id="WP_001247096.1">
    <property type="nucleotide sequence ID" value="NC_012759.1"/>
</dbReference>
<dbReference type="SMR" id="P0CG18"/>
<dbReference type="KEGG" id="ebw:BWG_3334"/>
<dbReference type="HOGENOM" id="CLU_050858_0_0_6"/>
<dbReference type="GO" id="GO:0000175">
    <property type="term" value="F:3'-5'-RNA exonuclease activity"/>
    <property type="evidence" value="ECO:0007669"/>
    <property type="project" value="UniProtKB-UniRule"/>
</dbReference>
<dbReference type="GO" id="GO:0000049">
    <property type="term" value="F:tRNA binding"/>
    <property type="evidence" value="ECO:0007669"/>
    <property type="project" value="UniProtKB-UniRule"/>
</dbReference>
<dbReference type="GO" id="GO:0009022">
    <property type="term" value="F:tRNA nucleotidyltransferase activity"/>
    <property type="evidence" value="ECO:0007669"/>
    <property type="project" value="UniProtKB-UniRule"/>
</dbReference>
<dbReference type="GO" id="GO:0016075">
    <property type="term" value="P:rRNA catabolic process"/>
    <property type="evidence" value="ECO:0007669"/>
    <property type="project" value="UniProtKB-UniRule"/>
</dbReference>
<dbReference type="GO" id="GO:0006364">
    <property type="term" value="P:rRNA processing"/>
    <property type="evidence" value="ECO:0007669"/>
    <property type="project" value="UniProtKB-KW"/>
</dbReference>
<dbReference type="GO" id="GO:0008033">
    <property type="term" value="P:tRNA processing"/>
    <property type="evidence" value="ECO:0007669"/>
    <property type="project" value="UniProtKB-UniRule"/>
</dbReference>
<dbReference type="CDD" id="cd11362">
    <property type="entry name" value="RNase_PH_bact"/>
    <property type="match status" value="1"/>
</dbReference>
<dbReference type="FunFam" id="3.30.230.70:FF:000003">
    <property type="entry name" value="Ribonuclease PH"/>
    <property type="match status" value="1"/>
</dbReference>
<dbReference type="Gene3D" id="3.30.230.70">
    <property type="entry name" value="GHMP Kinase, N-terminal domain"/>
    <property type="match status" value="1"/>
</dbReference>
<dbReference type="HAMAP" id="MF_00564">
    <property type="entry name" value="RNase_PH"/>
    <property type="match status" value="1"/>
</dbReference>
<dbReference type="InterPro" id="IPR001247">
    <property type="entry name" value="ExoRNase_PH_dom1"/>
</dbReference>
<dbReference type="InterPro" id="IPR015847">
    <property type="entry name" value="ExoRNase_PH_dom2"/>
</dbReference>
<dbReference type="InterPro" id="IPR036345">
    <property type="entry name" value="ExoRNase_PH_dom2_sf"/>
</dbReference>
<dbReference type="InterPro" id="IPR027408">
    <property type="entry name" value="PNPase/RNase_PH_dom_sf"/>
</dbReference>
<dbReference type="InterPro" id="IPR020568">
    <property type="entry name" value="Ribosomal_Su5_D2-typ_SF"/>
</dbReference>
<dbReference type="InterPro" id="IPR050080">
    <property type="entry name" value="RNase_PH"/>
</dbReference>
<dbReference type="InterPro" id="IPR002381">
    <property type="entry name" value="RNase_PH_bac-type"/>
</dbReference>
<dbReference type="InterPro" id="IPR018336">
    <property type="entry name" value="RNase_PH_CS"/>
</dbReference>
<dbReference type="NCBIfam" id="TIGR01966">
    <property type="entry name" value="RNasePH"/>
    <property type="match status" value="1"/>
</dbReference>
<dbReference type="PANTHER" id="PTHR11953">
    <property type="entry name" value="EXOSOME COMPLEX COMPONENT"/>
    <property type="match status" value="1"/>
</dbReference>
<dbReference type="PANTHER" id="PTHR11953:SF0">
    <property type="entry name" value="EXOSOME COMPLEX COMPONENT RRP41"/>
    <property type="match status" value="1"/>
</dbReference>
<dbReference type="Pfam" id="PF01138">
    <property type="entry name" value="RNase_PH"/>
    <property type="match status" value="1"/>
</dbReference>
<dbReference type="Pfam" id="PF03725">
    <property type="entry name" value="RNase_PH_C"/>
    <property type="match status" value="1"/>
</dbReference>
<dbReference type="SUPFAM" id="SSF55666">
    <property type="entry name" value="Ribonuclease PH domain 2-like"/>
    <property type="match status" value="1"/>
</dbReference>
<dbReference type="SUPFAM" id="SSF54211">
    <property type="entry name" value="Ribosomal protein S5 domain 2-like"/>
    <property type="match status" value="1"/>
</dbReference>
<dbReference type="PROSITE" id="PS01277">
    <property type="entry name" value="RIBONUCLEASE_PH"/>
    <property type="match status" value="1"/>
</dbReference>
<proteinExistence type="evidence at protein level"/>
<comment type="function">
    <text evidence="2 3">Phosphorolytic exoribonuclease that plays an important role in tRNA 3'-end maturation; has no activity on a tRNA precursor with a 3'-terminal phosphate group (PubMed:1512253). In vitro is freely reversible, adds nucleotides to the ends of RNA molecules by using nucleoside diphosphates as substrates, but this may not be physiologically important (PubMed:1512253). Probably plays a role in initiation of 16S rRNA degradation (leading to ribosome degradation) during starvation.</text>
</comment>
<comment type="catalytic activity">
    <reaction evidence="1 2">
        <text>tRNA(n+1) + phosphate = tRNA(n) + a ribonucleoside 5'-diphosphate</text>
        <dbReference type="Rhea" id="RHEA:10628"/>
        <dbReference type="Rhea" id="RHEA-COMP:17343"/>
        <dbReference type="Rhea" id="RHEA-COMP:17344"/>
        <dbReference type="ChEBI" id="CHEBI:43474"/>
        <dbReference type="ChEBI" id="CHEBI:57930"/>
        <dbReference type="ChEBI" id="CHEBI:173114"/>
        <dbReference type="EC" id="2.7.7.56"/>
    </reaction>
</comment>
<comment type="cofactor">
    <cofactor evidence="2">
        <name>Mg(2+)</name>
        <dbReference type="ChEBI" id="CHEBI:18420"/>
    </cofactor>
    <text evidence="2">Can also use Mn(2+) or Co(2+) with reduced efficiency. K(+) simulates the degradative reaction.</text>
</comment>
<comment type="biophysicochemical properties">
    <kinetics>
        <KM evidence="2">2 mM for phosphate in the degradative reaction</KM>
        <KM evidence="2">1 uM for tRNA-CCA-C2-3 in the degradative reaction</KM>
    </kinetics>
    <phDependence>
        <text evidence="2">Optimum pH is 8-9 for degradation (PubMed:1512253).</text>
    </phDependence>
    <temperatureDependence>
        <text evidence="2">Optimum temperature is 40 degrees Celsius activity drops off quickly from 45 degrees Celsius (PubMed:1512253).</text>
    </temperatureDependence>
</comment>
<comment type="subunit">
    <text evidence="2 7">Homodimer (PubMed:1885537). Has a tendency to aggregate into multimers (PubMed:1512253).</text>
</comment>
<comment type="disruption phenotype">
    <text evidence="4">A single deletion in rich medium makes filamentous cells with little DNA. No growth defect in minimal medium. Does not grow at 45 degrees Celsius.</text>
</comment>
<comment type="miscellaneous">
    <text>The gene in K12 strains MG1655 and W3110 (and also other derivatives of K12 W1485) has a frameshift mutation that leads to loss of activity, although the protein may be translated. Thus in those strains rph is an expressed catalytically inactive protein. Strains shown in this entry are derivatives of K12 MC1000 or MC4100, in which the frameshift has not occured and thus are active.</text>
</comment>
<comment type="similarity">
    <text evidence="1">Belongs to the RNase PH family.</text>
</comment>
<name>RNPH_ECOBW</name>
<keyword id="KW-0903">Direct protein sequencing</keyword>
<keyword id="KW-0548">Nucleotidyltransferase</keyword>
<keyword id="KW-0694">RNA-binding</keyword>
<keyword id="KW-0698">rRNA processing</keyword>
<keyword id="KW-0808">Transferase</keyword>
<keyword id="KW-0819">tRNA processing</keyword>
<keyword id="KW-0820">tRNA-binding</keyword>
<feature type="chain" id="PRO_1000212061" description="Ribonuclease PH">
    <location>
        <begin position="1"/>
        <end position="238"/>
    </location>
</feature>
<feature type="binding site" evidence="1">
    <location>
        <position position="86"/>
    </location>
    <ligand>
        <name>phosphate</name>
        <dbReference type="ChEBI" id="CHEBI:43474"/>
        <note>substrate</note>
    </ligand>
</feature>
<feature type="binding site" evidence="1">
    <location>
        <begin position="124"/>
        <end position="126"/>
    </location>
    <ligand>
        <name>phosphate</name>
        <dbReference type="ChEBI" id="CHEBI:43474"/>
        <note>substrate</note>
    </ligand>
</feature>
<feature type="sequence conflict" description="In Ref. 1; CAA25357." evidence="6" ref="1">
    <original>GG</original>
    <variation>AW</variation>
    <location>
        <begin position="123"/>
        <end position="124"/>
    </location>
</feature>